<organism>
    <name type="scientific">Mycobacterium tuberculosis (strain CDC 1551 / Oshkosh)</name>
    <dbReference type="NCBI Taxonomy" id="83331"/>
    <lineage>
        <taxon>Bacteria</taxon>
        <taxon>Bacillati</taxon>
        <taxon>Actinomycetota</taxon>
        <taxon>Actinomycetes</taxon>
        <taxon>Mycobacteriales</taxon>
        <taxon>Mycobacteriaceae</taxon>
        <taxon>Mycobacterium</taxon>
        <taxon>Mycobacterium tuberculosis complex</taxon>
    </lineage>
</organism>
<name>DESA2_MYCTO</name>
<feature type="chain" id="PRO_0000427041" description="Putative acyl-[acyl-carrier-protein] desaturase DesA2">
    <location>
        <begin position="1"/>
        <end position="275"/>
    </location>
</feature>
<feature type="binding site" evidence="1">
    <location>
        <position position="107"/>
    </location>
    <ligand>
        <name>Fe cation</name>
        <dbReference type="ChEBI" id="CHEBI:24875"/>
        <label>1</label>
    </ligand>
</feature>
<feature type="binding site" evidence="1">
    <location>
        <position position="107"/>
    </location>
    <ligand>
        <name>Fe cation</name>
        <dbReference type="ChEBI" id="CHEBI:24875"/>
        <label>2</label>
    </ligand>
</feature>
<feature type="binding site" evidence="1">
    <location>
        <position position="110"/>
    </location>
    <ligand>
        <name>Fe cation</name>
        <dbReference type="ChEBI" id="CHEBI:24875"/>
        <label>1</label>
    </ligand>
</feature>
<feature type="binding site" evidence="1">
    <location>
        <position position="159"/>
    </location>
    <ligand>
        <name>Fe cation</name>
        <dbReference type="ChEBI" id="CHEBI:24875"/>
        <label>2</label>
    </ligand>
</feature>
<feature type="binding site" evidence="1">
    <location>
        <position position="189"/>
    </location>
    <ligand>
        <name>Fe cation</name>
        <dbReference type="ChEBI" id="CHEBI:24875"/>
        <label>1</label>
    </ligand>
</feature>
<feature type="binding site" evidence="1">
    <location>
        <position position="189"/>
    </location>
    <ligand>
        <name>Fe cation</name>
        <dbReference type="ChEBI" id="CHEBI:24875"/>
        <label>2</label>
    </ligand>
</feature>
<feature type="binding site" evidence="1">
    <location>
        <position position="192"/>
    </location>
    <ligand>
        <name>Fe cation</name>
        <dbReference type="ChEBI" id="CHEBI:24875"/>
        <label>2</label>
    </ligand>
</feature>
<sequence>MAQKPVADALTLELEPVVEANMTRHLDTEDIWFAHDYVPFDQGENFAFLGGRDWDPSQSTLPRTITDACEILLILKDNLAGHHRELVEHFILEDWWGRWLGRWTAEEHLHAIALREYLVVTREVDPVANEDVRVQHVMKGYRAEKYTQVETLVYMAFYERCGAVFCRNLAAQIEEPILAGLIDRIARDEVRHEEFFANLVTHCLDYTRDETIAAIAARAADLDVLGADIEAYRDKLQNVADAGIFGKPQLRQLISDRITAWGLAGEPSLKQFVTG</sequence>
<gene>
    <name type="primary">desA2</name>
    <name type="ordered locus">MT1126</name>
</gene>
<dbReference type="EC" id="1.14.19.-" evidence="2"/>
<dbReference type="EMBL" id="AE000516">
    <property type="protein sequence ID" value="AAK45384.1"/>
    <property type="molecule type" value="Genomic_DNA"/>
</dbReference>
<dbReference type="PIR" id="D70896">
    <property type="entry name" value="D70896"/>
</dbReference>
<dbReference type="RefSeq" id="WP_003405801.1">
    <property type="nucleotide sequence ID" value="NZ_KK341227.1"/>
</dbReference>
<dbReference type="SMR" id="P9WNZ4"/>
<dbReference type="KEGG" id="mtc:MT1126"/>
<dbReference type="PATRIC" id="fig|83331.31.peg.1216"/>
<dbReference type="HOGENOM" id="CLU_034505_3_0_11"/>
<dbReference type="UniPathway" id="UPA00199"/>
<dbReference type="Proteomes" id="UP000001020">
    <property type="component" value="Chromosome"/>
</dbReference>
<dbReference type="GO" id="GO:0005829">
    <property type="term" value="C:cytosol"/>
    <property type="evidence" value="ECO:0007669"/>
    <property type="project" value="TreeGrafter"/>
</dbReference>
<dbReference type="GO" id="GO:0046872">
    <property type="term" value="F:metal ion binding"/>
    <property type="evidence" value="ECO:0007669"/>
    <property type="project" value="UniProtKB-KW"/>
</dbReference>
<dbReference type="GO" id="GO:0045300">
    <property type="term" value="F:stearoyl-[ACP] desaturase activity"/>
    <property type="evidence" value="ECO:0007669"/>
    <property type="project" value="InterPro"/>
</dbReference>
<dbReference type="GO" id="GO:0006633">
    <property type="term" value="P:fatty acid biosynthetic process"/>
    <property type="evidence" value="ECO:0007669"/>
    <property type="project" value="UniProtKB-KW"/>
</dbReference>
<dbReference type="Gene3D" id="1.10.620.20">
    <property type="entry name" value="Ribonucleotide Reductase, subunit A"/>
    <property type="match status" value="1"/>
</dbReference>
<dbReference type="InterPro" id="IPR005067">
    <property type="entry name" value="Fatty_acid_desaturase-2"/>
</dbReference>
<dbReference type="InterPro" id="IPR009078">
    <property type="entry name" value="Ferritin-like_SF"/>
</dbReference>
<dbReference type="InterPro" id="IPR012348">
    <property type="entry name" value="RNR-like"/>
</dbReference>
<dbReference type="PANTHER" id="PTHR31155">
    <property type="entry name" value="ACYL- ACYL-CARRIER-PROTEIN DESATURASE-RELATED"/>
    <property type="match status" value="1"/>
</dbReference>
<dbReference type="PANTHER" id="PTHR31155:SF9">
    <property type="entry name" value="STEAROYL-[ACYL-CARRIER-PROTEIN] 9-DESATURASE 7, CHLOROPLASTIC"/>
    <property type="match status" value="1"/>
</dbReference>
<dbReference type="Pfam" id="PF03405">
    <property type="entry name" value="FA_desaturase_2"/>
    <property type="match status" value="1"/>
</dbReference>
<dbReference type="PIRSF" id="PIRSF000346">
    <property type="entry name" value="Dlt9_acylACP_des"/>
    <property type="match status" value="1"/>
</dbReference>
<dbReference type="SUPFAM" id="SSF47240">
    <property type="entry name" value="Ferritin-like"/>
    <property type="match status" value="1"/>
</dbReference>
<evidence type="ECO:0000250" key="1">
    <source>
        <dbReference type="UniProtKB" id="P22337"/>
    </source>
</evidence>
<evidence type="ECO:0000250" key="2">
    <source>
        <dbReference type="UniProtKB" id="P9WNZ5"/>
    </source>
</evidence>
<evidence type="ECO:0000305" key="3"/>
<comment type="function">
    <text evidence="2">May be a desaturase involved in mycobacterial fatty acid biosynthesis.</text>
</comment>
<comment type="cofactor">
    <cofactor evidence="1">
        <name>Fe(2+)</name>
        <dbReference type="ChEBI" id="CHEBI:29033"/>
    </cofactor>
    <text evidence="1">Binds 2 Fe(2+) ions per subunit.</text>
</comment>
<comment type="pathway">
    <text evidence="2">Lipid metabolism; fatty acid metabolism.</text>
</comment>
<comment type="subunit">
    <text evidence="2">Homodimer.</text>
</comment>
<comment type="similarity">
    <text evidence="3">Belongs to the fatty acid desaturase type 2 family.</text>
</comment>
<accession>P9WNZ4</accession>
<accession>L0T8L4</accession>
<accession>O53442</accession>
<accession>Q7D8V3</accession>
<keyword id="KW-0275">Fatty acid biosynthesis</keyword>
<keyword id="KW-0276">Fatty acid metabolism</keyword>
<keyword id="KW-0408">Iron</keyword>
<keyword id="KW-0444">Lipid biosynthesis</keyword>
<keyword id="KW-0443">Lipid metabolism</keyword>
<keyword id="KW-0479">Metal-binding</keyword>
<keyword id="KW-0560">Oxidoreductase</keyword>
<keyword id="KW-1185">Reference proteome</keyword>
<reference key="1">
    <citation type="journal article" date="2002" name="J. Bacteriol.">
        <title>Whole-genome comparison of Mycobacterium tuberculosis clinical and laboratory strains.</title>
        <authorList>
            <person name="Fleischmann R.D."/>
            <person name="Alland D."/>
            <person name="Eisen J.A."/>
            <person name="Carpenter L."/>
            <person name="White O."/>
            <person name="Peterson J.D."/>
            <person name="DeBoy R.T."/>
            <person name="Dodson R.J."/>
            <person name="Gwinn M.L."/>
            <person name="Haft D.H."/>
            <person name="Hickey E.K."/>
            <person name="Kolonay J.F."/>
            <person name="Nelson W.C."/>
            <person name="Umayam L.A."/>
            <person name="Ermolaeva M.D."/>
            <person name="Salzberg S.L."/>
            <person name="Delcher A."/>
            <person name="Utterback T.R."/>
            <person name="Weidman J.F."/>
            <person name="Khouri H.M."/>
            <person name="Gill J."/>
            <person name="Mikula A."/>
            <person name="Bishai W."/>
            <person name="Jacobs W.R. Jr."/>
            <person name="Venter J.C."/>
            <person name="Fraser C.M."/>
        </authorList>
    </citation>
    <scope>NUCLEOTIDE SEQUENCE [LARGE SCALE GENOMIC DNA]</scope>
    <source>
        <strain>CDC 1551 / Oshkosh</strain>
    </source>
</reference>
<protein>
    <recommendedName>
        <fullName evidence="2">Putative acyl-[acyl-carrier-protein] desaturase DesA2</fullName>
        <shortName evidence="2">Putative acyl-ACP desaturase DesA2</shortName>
        <ecNumber evidence="2">1.14.19.-</ecNumber>
    </recommendedName>
</protein>
<proteinExistence type="inferred from homology"/>